<dbReference type="EMBL" id="X14363">
    <property type="protein sequence ID" value="CAA32544.1"/>
    <property type="molecule type" value="Genomic_DNA"/>
</dbReference>
<dbReference type="EMBL" id="BX936398">
    <property type="protein sequence ID" value="CAH22934.1"/>
    <property type="molecule type" value="Genomic_DNA"/>
</dbReference>
<dbReference type="PIR" id="S04142">
    <property type="entry name" value="R5EB23"/>
</dbReference>
<dbReference type="RefSeq" id="WP_002213423.1">
    <property type="nucleotide sequence ID" value="NZ_CP009712.1"/>
</dbReference>
<dbReference type="SMR" id="P69964"/>
<dbReference type="GeneID" id="96663194"/>
<dbReference type="KEGG" id="ypo:BZ17_2891"/>
<dbReference type="KEGG" id="yps:YPTB3696"/>
<dbReference type="PATRIC" id="fig|273123.14.peg.3032"/>
<dbReference type="Proteomes" id="UP000001011">
    <property type="component" value="Chromosome"/>
</dbReference>
<dbReference type="GO" id="GO:1990904">
    <property type="term" value="C:ribonucleoprotein complex"/>
    <property type="evidence" value="ECO:0007669"/>
    <property type="project" value="UniProtKB-KW"/>
</dbReference>
<dbReference type="GO" id="GO:0005840">
    <property type="term" value="C:ribosome"/>
    <property type="evidence" value="ECO:0007669"/>
    <property type="project" value="UniProtKB-KW"/>
</dbReference>
<dbReference type="GO" id="GO:0019843">
    <property type="term" value="F:rRNA binding"/>
    <property type="evidence" value="ECO:0007669"/>
    <property type="project" value="UniProtKB-UniRule"/>
</dbReference>
<dbReference type="GO" id="GO:0003735">
    <property type="term" value="F:structural constituent of ribosome"/>
    <property type="evidence" value="ECO:0007669"/>
    <property type="project" value="InterPro"/>
</dbReference>
<dbReference type="GO" id="GO:0006412">
    <property type="term" value="P:translation"/>
    <property type="evidence" value="ECO:0007669"/>
    <property type="project" value="UniProtKB-UniRule"/>
</dbReference>
<dbReference type="FunFam" id="3.30.70.330:FF:000001">
    <property type="entry name" value="50S ribosomal protein L23"/>
    <property type="match status" value="1"/>
</dbReference>
<dbReference type="Gene3D" id="3.30.70.330">
    <property type="match status" value="1"/>
</dbReference>
<dbReference type="HAMAP" id="MF_01369_B">
    <property type="entry name" value="Ribosomal_uL23_B"/>
    <property type="match status" value="1"/>
</dbReference>
<dbReference type="InterPro" id="IPR012677">
    <property type="entry name" value="Nucleotide-bd_a/b_plait_sf"/>
</dbReference>
<dbReference type="InterPro" id="IPR013025">
    <property type="entry name" value="Ribosomal_uL23-like"/>
</dbReference>
<dbReference type="InterPro" id="IPR012678">
    <property type="entry name" value="Ribosomal_uL23/eL15/eS24_sf"/>
</dbReference>
<dbReference type="InterPro" id="IPR001014">
    <property type="entry name" value="Ribosomal_uL23_CS"/>
</dbReference>
<dbReference type="NCBIfam" id="NF004358">
    <property type="entry name" value="PRK05738.1-1"/>
    <property type="match status" value="1"/>
</dbReference>
<dbReference type="NCBIfam" id="NF004359">
    <property type="entry name" value="PRK05738.1-3"/>
    <property type="match status" value="1"/>
</dbReference>
<dbReference type="NCBIfam" id="NF004363">
    <property type="entry name" value="PRK05738.2-4"/>
    <property type="match status" value="1"/>
</dbReference>
<dbReference type="NCBIfam" id="NF004366">
    <property type="entry name" value="PRK05738.3-2"/>
    <property type="match status" value="1"/>
</dbReference>
<dbReference type="PANTHER" id="PTHR11620">
    <property type="entry name" value="60S RIBOSOMAL PROTEIN L23A"/>
    <property type="match status" value="1"/>
</dbReference>
<dbReference type="Pfam" id="PF00276">
    <property type="entry name" value="Ribosomal_L23"/>
    <property type="match status" value="1"/>
</dbReference>
<dbReference type="SUPFAM" id="SSF54189">
    <property type="entry name" value="Ribosomal proteins S24e, L23 and L15e"/>
    <property type="match status" value="1"/>
</dbReference>
<dbReference type="PROSITE" id="PS00050">
    <property type="entry name" value="RIBOSOMAL_L23"/>
    <property type="match status" value="1"/>
</dbReference>
<keyword id="KW-0687">Ribonucleoprotein</keyword>
<keyword id="KW-0689">Ribosomal protein</keyword>
<keyword id="KW-0694">RNA-binding</keyword>
<keyword id="KW-0699">rRNA-binding</keyword>
<evidence type="ECO:0000255" key="1">
    <source>
        <dbReference type="HAMAP-Rule" id="MF_01369"/>
    </source>
</evidence>
<evidence type="ECO:0000305" key="2"/>
<comment type="function">
    <text evidence="1">One of the early assembly proteins it binds 23S rRNA. One of the proteins that surrounds the polypeptide exit tunnel on the outside of the ribosome. Forms the main docking site for trigger factor binding to the ribosome.</text>
</comment>
<comment type="subunit">
    <text evidence="1">Part of the 50S ribosomal subunit. Contacts protein L29, and trigger factor when it is bound to the ribosome.</text>
</comment>
<comment type="similarity">
    <text evidence="1">Belongs to the universal ribosomal protein uL23 family.</text>
</comment>
<proteinExistence type="inferred from homology"/>
<gene>
    <name evidence="1" type="primary">rplW</name>
    <name type="ordered locus">YPTB3696</name>
</gene>
<protein>
    <recommendedName>
        <fullName evidence="1">Large ribosomal subunit protein uL23</fullName>
    </recommendedName>
    <alternativeName>
        <fullName evidence="2">50S ribosomal protein L23</fullName>
    </alternativeName>
</protein>
<reference key="1">
    <citation type="journal article" date="1989" name="Nucleic Acids Res.">
        <title>High degree of conservation between ribosomal proteins of Yersinia pseudotuberculosis and Escherichia coli.</title>
        <authorList>
            <person name="Gross U."/>
            <person name="Chen J.H."/>
            <person name="Kono D.H."/>
            <person name="Lobo J.G."/>
            <person name="Yu D.T.Y."/>
        </authorList>
    </citation>
    <scope>NUCLEOTIDE SEQUENCE [GENOMIC DNA]</scope>
</reference>
<reference key="2">
    <citation type="journal article" date="2004" name="Proc. Natl. Acad. Sci. U.S.A.">
        <title>Insights into the evolution of Yersinia pestis through whole-genome comparison with Yersinia pseudotuberculosis.</title>
        <authorList>
            <person name="Chain P.S.G."/>
            <person name="Carniel E."/>
            <person name="Larimer F.W."/>
            <person name="Lamerdin J."/>
            <person name="Stoutland P.O."/>
            <person name="Regala W.M."/>
            <person name="Georgescu A.M."/>
            <person name="Vergez L.M."/>
            <person name="Land M.L."/>
            <person name="Motin V.L."/>
            <person name="Brubaker R.R."/>
            <person name="Fowler J."/>
            <person name="Hinnebusch J."/>
            <person name="Marceau M."/>
            <person name="Medigue C."/>
            <person name="Simonet M."/>
            <person name="Chenal-Francisque V."/>
            <person name="Souza B."/>
            <person name="Dacheux D."/>
            <person name="Elliott J.M."/>
            <person name="Derbise A."/>
            <person name="Hauser L.J."/>
            <person name="Garcia E."/>
        </authorList>
    </citation>
    <scope>NUCLEOTIDE SEQUENCE [LARGE SCALE GENOMIC DNA]</scope>
    <source>
        <strain>IP32953</strain>
    </source>
</reference>
<feature type="chain" id="PRO_0000129432" description="Large ribosomal subunit protein uL23">
    <location>
        <begin position="1"/>
        <end position="100"/>
    </location>
</feature>
<organism>
    <name type="scientific">Yersinia pseudotuberculosis serotype I (strain IP32953)</name>
    <dbReference type="NCBI Taxonomy" id="273123"/>
    <lineage>
        <taxon>Bacteria</taxon>
        <taxon>Pseudomonadati</taxon>
        <taxon>Pseudomonadota</taxon>
        <taxon>Gammaproteobacteria</taxon>
        <taxon>Enterobacterales</taxon>
        <taxon>Yersiniaceae</taxon>
        <taxon>Yersinia</taxon>
    </lineage>
</organism>
<name>RL23_YERPS</name>
<sequence length="100" mass="11230">MIREERLLKVLRSPHVSEKASAAMEKNNTIVLKVAKDATKAEIKAAVQKLFEVEVEDVNTLLVKGKSKRHGQRVGRRSDWKKAYVTLKEGQNLDFIGGAE</sequence>
<accession>P69964</accession>
<accession>P11254</accession>
<accession>Q664S3</accession>